<sequence length="257" mass="29571">MKPLRLSSLDPVRMPEWRWAPFLSHAINALIPLKPEPYPVAPEFLQREGKTGSKSQPIKVTTCTWACRTKKFRQVRAACVEAGSSASVLNFVINPYHTFDLPFFGADLVTLPSGHLLALDLQPAITSDERHTKQVWERLMPIFEQWRVRLPEGGPIPEEAKPYFSPGFLWTRLHLGSEGNQLIDEVIMPAFRDYLNLYLDLVEMAEEVSPQRAFKLLEGQKRYLSYRGKKDPARAMLARFHGHQWTESYIHNVLFDL</sequence>
<organism>
    <name type="scientific">Prochlorococcus marinus (strain MIT 9303)</name>
    <dbReference type="NCBI Taxonomy" id="59922"/>
    <lineage>
        <taxon>Bacteria</taxon>
        <taxon>Bacillati</taxon>
        <taxon>Cyanobacteriota</taxon>
        <taxon>Cyanophyceae</taxon>
        <taxon>Synechococcales</taxon>
        <taxon>Prochlorococcaceae</taxon>
        <taxon>Prochlorococcus</taxon>
    </lineage>
</organism>
<reference key="1">
    <citation type="journal article" date="2007" name="PLoS Genet.">
        <title>Patterns and implications of gene gain and loss in the evolution of Prochlorococcus.</title>
        <authorList>
            <person name="Kettler G.C."/>
            <person name="Martiny A.C."/>
            <person name="Huang K."/>
            <person name="Zucker J."/>
            <person name="Coleman M.L."/>
            <person name="Rodrigue S."/>
            <person name="Chen F."/>
            <person name="Lapidus A."/>
            <person name="Ferriera S."/>
            <person name="Johnson J."/>
            <person name="Steglich C."/>
            <person name="Church G.M."/>
            <person name="Richardson P."/>
            <person name="Chisholm S.W."/>
        </authorList>
    </citation>
    <scope>NUCLEOTIDE SEQUENCE [LARGE SCALE GENOMIC DNA]</scope>
    <source>
        <strain>MIT 9303</strain>
    </source>
</reference>
<comment type="function">
    <text evidence="1">Catalyzes the two-electron reduction of the C2 and C3(1) diene system of 15,16-dihydrobiliverdin.</text>
</comment>
<comment type="catalytic activity">
    <reaction evidence="1">
        <text>(3Z)-phycoerythrobilin + oxidized 2[4Fe-4S]-[ferredoxin] = 15,16-dihydrobiliverdin + reduced 2[4Fe-4S]-[ferredoxin] + 2 H(+)</text>
        <dbReference type="Rhea" id="RHEA:22092"/>
        <dbReference type="Rhea" id="RHEA-COMP:10002"/>
        <dbReference type="Rhea" id="RHEA-COMP:10004"/>
        <dbReference type="ChEBI" id="CHEBI:15378"/>
        <dbReference type="ChEBI" id="CHEBI:33722"/>
        <dbReference type="ChEBI" id="CHEBI:33723"/>
        <dbReference type="ChEBI" id="CHEBI:57438"/>
        <dbReference type="ChEBI" id="CHEBI:57899"/>
        <dbReference type="EC" id="1.3.7.3"/>
    </reaction>
</comment>
<comment type="similarity">
    <text evidence="1">Belongs to the HY2 family.</text>
</comment>
<feature type="chain" id="PRO_1000046928" description="Phycoerythrobilin:ferredoxin oxidoreductase">
    <location>
        <begin position="1"/>
        <end position="257"/>
    </location>
</feature>
<name>PEBB_PROM3</name>
<protein>
    <recommendedName>
        <fullName evidence="1">Phycoerythrobilin:ferredoxin oxidoreductase</fullName>
        <ecNumber evidence="1">1.3.7.3</ecNumber>
    </recommendedName>
</protein>
<dbReference type="EC" id="1.3.7.3" evidence="1"/>
<dbReference type="EMBL" id="CP000554">
    <property type="protein sequence ID" value="ABM78979.1"/>
    <property type="molecule type" value="Genomic_DNA"/>
</dbReference>
<dbReference type="RefSeq" id="WP_011826847.1">
    <property type="nucleotide sequence ID" value="NC_008820.1"/>
</dbReference>
<dbReference type="SMR" id="A2CBW9"/>
<dbReference type="STRING" id="59922.P9303_22441"/>
<dbReference type="KEGG" id="pmf:P9303_22441"/>
<dbReference type="HOGENOM" id="CLU_086208_1_0_3"/>
<dbReference type="BioCyc" id="PMAR59922:G1G80-1964-MONOMER"/>
<dbReference type="Proteomes" id="UP000002274">
    <property type="component" value="Chromosome"/>
</dbReference>
<dbReference type="GO" id="GO:0050897">
    <property type="term" value="F:cobalt ion binding"/>
    <property type="evidence" value="ECO:0007669"/>
    <property type="project" value="InterPro"/>
</dbReference>
<dbReference type="GO" id="GO:0050618">
    <property type="term" value="F:phycoerythrobilin:ferredoxin oxidoreductase activity"/>
    <property type="evidence" value="ECO:0007669"/>
    <property type="project" value="UniProtKB-UniRule"/>
</dbReference>
<dbReference type="GO" id="GO:0010024">
    <property type="term" value="P:phytochromobilin biosynthetic process"/>
    <property type="evidence" value="ECO:0007669"/>
    <property type="project" value="InterPro"/>
</dbReference>
<dbReference type="Gene3D" id="3.40.1500.20">
    <property type="match status" value="1"/>
</dbReference>
<dbReference type="HAMAP" id="MF_00793">
    <property type="entry name" value="PebB"/>
    <property type="match status" value="1"/>
</dbReference>
<dbReference type="InterPro" id="IPR009249">
    <property type="entry name" value="Ferredoxin-dep_bilin_Rdtase"/>
</dbReference>
<dbReference type="InterPro" id="IPR022827">
    <property type="entry name" value="Phycoerythrobilin_Fdx_Rdtase"/>
</dbReference>
<dbReference type="NCBIfam" id="NF009722">
    <property type="entry name" value="PRK13249.1"/>
    <property type="match status" value="1"/>
</dbReference>
<dbReference type="PANTHER" id="PTHR34557">
    <property type="entry name" value="PHYTOCHROMOBILIN:FERREDOXIN OXIDOREDUCTASE, CHLOROPLASTIC"/>
    <property type="match status" value="1"/>
</dbReference>
<dbReference type="PANTHER" id="PTHR34557:SF1">
    <property type="entry name" value="PHYTOCHROMOBILIN:FERREDOXIN OXIDOREDUCTASE, CHLOROPLASTIC"/>
    <property type="match status" value="1"/>
</dbReference>
<dbReference type="Pfam" id="PF05996">
    <property type="entry name" value="Fe_bilin_red"/>
    <property type="match status" value="1"/>
</dbReference>
<evidence type="ECO:0000255" key="1">
    <source>
        <dbReference type="HAMAP-Rule" id="MF_00793"/>
    </source>
</evidence>
<proteinExistence type="inferred from homology"/>
<accession>A2CBW9</accession>
<gene>
    <name evidence="1" type="primary">pebB</name>
    <name type="ordered locus">P9303_22441</name>
</gene>
<keyword id="KW-0560">Oxidoreductase</keyword>